<protein>
    <recommendedName>
        <fullName>Integrin beta-6</fullName>
    </recommendedName>
</protein>
<keyword id="KW-0002">3D-structure</keyword>
<keyword id="KW-0106">Calcium</keyword>
<keyword id="KW-0130">Cell adhesion</keyword>
<keyword id="KW-0965">Cell junction</keyword>
<keyword id="KW-1003">Cell membrane</keyword>
<keyword id="KW-1015">Disulfide bond</keyword>
<keyword id="KW-0245">EGF-like domain</keyword>
<keyword id="KW-0325">Glycoprotein</keyword>
<keyword id="KW-0401">Integrin</keyword>
<keyword id="KW-0460">Magnesium</keyword>
<keyword id="KW-0472">Membrane</keyword>
<keyword id="KW-0479">Metal-binding</keyword>
<keyword id="KW-0675">Receptor</keyword>
<keyword id="KW-1185">Reference proteome</keyword>
<keyword id="KW-0677">Repeat</keyword>
<keyword id="KW-0732">Signal</keyword>
<keyword id="KW-0812">Transmembrane</keyword>
<keyword id="KW-1133">Transmembrane helix</keyword>
<comment type="function">
    <text evidence="2 5">Integrin alpha-V:beta-6 (ITGAV:ITGB6) is a receptor for fibronectin and cytotactin (By similarity). It recognizes the sequence R-G-D in its ligands (PubMed:10025398). ITGAV:ITGB6 acts as a receptor for fibrillin-1 (FBN1) and mediates R-G-D-dependent cell adhesion to FBN1 (By similarity). Integrin alpha-V:beta-6 (ITGAV:ITGB6) mediates R-G-D-dependent release of transforming growth factor beta-1 (TGF-beta-1) from regulatory Latency-associated peptide (LAP), thereby playing a key role in TGF-beta-1 activation (PubMed:10025398).</text>
</comment>
<comment type="subunit">
    <text evidence="2 5">Heterodimer of an alpha and a beta subunit (PubMed:10025398). Interacts with FLNB (By similarity). Interacts with HAX1 (By similarity). ITGAV:ITGB6 interacts with FBN1 (By similarity). ITGAV:ITGB6 interacts with TGFB1 (PubMed:10025398).</text>
</comment>
<comment type="subcellular location">
    <subcellularLocation>
        <location evidence="2">Cell membrane</location>
        <topology evidence="2">Single-pass type I membrane protein</topology>
    </subcellularLocation>
    <subcellularLocation>
        <location evidence="2">Cell junction</location>
        <location evidence="2">Focal adhesion</location>
    </subcellularLocation>
</comment>
<comment type="domain">
    <text evidence="1">The VWFA domain (or beta I domain) contains three cation-binding sites: the ligand-associated metal ion-binding site (LIMBS or SyMBS), the metal ion-dependent adhesion site (MIDAS), and the adjacent MIDAS site (ADMIDAS). This domain is also part of the ligand-binding site.</text>
</comment>
<comment type="similarity">
    <text evidence="6">Belongs to the integrin beta chain family.</text>
</comment>
<dbReference type="EMBL" id="AF115376">
    <property type="protein sequence ID" value="AAD17212.1"/>
    <property type="molecule type" value="mRNA"/>
</dbReference>
<dbReference type="EMBL" id="AK036439">
    <property type="protein sequence ID" value="BAC29430.1"/>
    <property type="molecule type" value="mRNA"/>
</dbReference>
<dbReference type="EMBL" id="BC049185">
    <property type="protein sequence ID" value="AAH49185.1"/>
    <property type="molecule type" value="mRNA"/>
</dbReference>
<dbReference type="CCDS" id="CCDS16060.1"/>
<dbReference type="RefSeq" id="NP_001153036.1">
    <property type="nucleotide sequence ID" value="NM_001159564.2"/>
</dbReference>
<dbReference type="RefSeq" id="NP_067334.1">
    <property type="nucleotide sequence ID" value="NM_021359.4"/>
</dbReference>
<dbReference type="RefSeq" id="XP_006498871.1">
    <property type="nucleotide sequence ID" value="XM_006498808.5"/>
</dbReference>
<dbReference type="RefSeq" id="XP_006498872.1">
    <property type="nucleotide sequence ID" value="XM_006498809.1"/>
</dbReference>
<dbReference type="RefSeq" id="XP_006498873.1">
    <property type="nucleotide sequence ID" value="XM_006498810.3"/>
</dbReference>
<dbReference type="RefSeq" id="XP_006498874.1">
    <property type="nucleotide sequence ID" value="XM_006498811.2"/>
</dbReference>
<dbReference type="RefSeq" id="XP_036014562.1">
    <property type="nucleotide sequence ID" value="XM_036158669.1"/>
</dbReference>
<dbReference type="PDB" id="8FSO">
    <property type="method" value="X-ray"/>
    <property type="resolution" value="2.33 A"/>
    <property type="chains" value="A=754-764"/>
</dbReference>
<dbReference type="PDBsum" id="8FSO"/>
<dbReference type="SMR" id="Q9Z0T9"/>
<dbReference type="ComplexPortal" id="CPX-3132">
    <property type="entry name" value="Integrin alphav-beta6 complex"/>
</dbReference>
<dbReference type="FunCoup" id="Q9Z0T9">
    <property type="interactions" value="434"/>
</dbReference>
<dbReference type="STRING" id="10090.ENSMUSP00000054944"/>
<dbReference type="CarbonylDB" id="Q9Z0T9"/>
<dbReference type="GlyCosmos" id="Q9Z0T9">
    <property type="glycosylation" value="9 sites, No reported glycans"/>
</dbReference>
<dbReference type="GlyGen" id="Q9Z0T9">
    <property type="glycosylation" value="11 sites, 1 N-linked glycan (1 site), 1 O-linked glycan (1 site)"/>
</dbReference>
<dbReference type="iPTMnet" id="Q9Z0T9"/>
<dbReference type="PhosphoSitePlus" id="Q9Z0T9"/>
<dbReference type="jPOST" id="Q9Z0T9"/>
<dbReference type="PaxDb" id="10090-ENSMUSP00000028348"/>
<dbReference type="ProteomicsDB" id="268902"/>
<dbReference type="ABCD" id="Q9Z0T9">
    <property type="antibodies" value="14 sequenced antibodies"/>
</dbReference>
<dbReference type="Antibodypedia" id="33727">
    <property type="antibodies" value="349 antibodies from 29 providers"/>
</dbReference>
<dbReference type="DNASU" id="16420"/>
<dbReference type="Ensembl" id="ENSMUST00000028348.9">
    <property type="protein sequence ID" value="ENSMUSP00000028348.3"/>
    <property type="gene ID" value="ENSMUSG00000026971.16"/>
</dbReference>
<dbReference type="Ensembl" id="ENSMUST00000059888.15">
    <property type="protein sequence ID" value="ENSMUSP00000054944.9"/>
    <property type="gene ID" value="ENSMUSG00000026971.16"/>
</dbReference>
<dbReference type="GeneID" id="16420"/>
<dbReference type="KEGG" id="mmu:16420"/>
<dbReference type="UCSC" id="uc008juj.2">
    <property type="organism name" value="mouse"/>
</dbReference>
<dbReference type="AGR" id="MGI:96615"/>
<dbReference type="CTD" id="3694"/>
<dbReference type="MGI" id="MGI:96615">
    <property type="gene designation" value="Itgb6"/>
</dbReference>
<dbReference type="VEuPathDB" id="HostDB:ENSMUSG00000026971"/>
<dbReference type="eggNOG" id="KOG1226">
    <property type="taxonomic scope" value="Eukaryota"/>
</dbReference>
<dbReference type="GeneTree" id="ENSGT01110000267169"/>
<dbReference type="InParanoid" id="Q9Z0T9"/>
<dbReference type="OMA" id="WIYTVEG"/>
<dbReference type="OrthoDB" id="410592at2759"/>
<dbReference type="PhylomeDB" id="Q9Z0T9"/>
<dbReference type="TreeFam" id="TF105392"/>
<dbReference type="Reactome" id="R-MMU-1566948">
    <property type="pathway name" value="Elastic fibre formation"/>
</dbReference>
<dbReference type="Reactome" id="R-MMU-2129379">
    <property type="pathway name" value="Molecules associated with elastic fibres"/>
</dbReference>
<dbReference type="Reactome" id="R-MMU-216083">
    <property type="pathway name" value="Integrin cell surface interactions"/>
</dbReference>
<dbReference type="Reactome" id="R-MMU-2173789">
    <property type="pathway name" value="TGF-beta receptor signaling activates SMADs"/>
</dbReference>
<dbReference type="Reactome" id="R-MMU-3000178">
    <property type="pathway name" value="ECM proteoglycans"/>
</dbReference>
<dbReference type="BioGRID-ORCS" id="16420">
    <property type="hits" value="1 hit in 76 CRISPR screens"/>
</dbReference>
<dbReference type="PRO" id="PR:Q9Z0T9"/>
<dbReference type="Proteomes" id="UP000000589">
    <property type="component" value="Chromosome 2"/>
</dbReference>
<dbReference type="RNAct" id="Q9Z0T9">
    <property type="molecule type" value="protein"/>
</dbReference>
<dbReference type="Bgee" id="ENSMUSG00000026971">
    <property type="expression patterns" value="Expressed in right kidney and 90 other cell types or tissues"/>
</dbReference>
<dbReference type="ExpressionAtlas" id="Q9Z0T9">
    <property type="expression patterns" value="baseline and differential"/>
</dbReference>
<dbReference type="GO" id="GO:0009986">
    <property type="term" value="C:cell surface"/>
    <property type="evidence" value="ECO:0000314"/>
    <property type="project" value="MGI"/>
</dbReference>
<dbReference type="GO" id="GO:0009897">
    <property type="term" value="C:external side of plasma membrane"/>
    <property type="evidence" value="ECO:0000314"/>
    <property type="project" value="MGI"/>
</dbReference>
<dbReference type="GO" id="GO:0005925">
    <property type="term" value="C:focal adhesion"/>
    <property type="evidence" value="ECO:0000250"/>
    <property type="project" value="UniProtKB"/>
</dbReference>
<dbReference type="GO" id="GO:0034685">
    <property type="term" value="C:integrin alphav-beta6 complex"/>
    <property type="evidence" value="ECO:0000314"/>
    <property type="project" value="CAFA"/>
</dbReference>
<dbReference type="GO" id="GO:0043235">
    <property type="term" value="C:receptor complex"/>
    <property type="evidence" value="ECO:0000266"/>
    <property type="project" value="MGI"/>
</dbReference>
<dbReference type="GO" id="GO:0005178">
    <property type="term" value="F:integrin binding"/>
    <property type="evidence" value="ECO:0000353"/>
    <property type="project" value="MGI"/>
</dbReference>
<dbReference type="GO" id="GO:0046872">
    <property type="term" value="F:metal ion binding"/>
    <property type="evidence" value="ECO:0007669"/>
    <property type="project" value="UniProtKB-KW"/>
</dbReference>
<dbReference type="GO" id="GO:0140677">
    <property type="term" value="F:molecular function activator activity"/>
    <property type="evidence" value="ECO:0007669"/>
    <property type="project" value="Ensembl"/>
</dbReference>
<dbReference type="GO" id="GO:0060348">
    <property type="term" value="P:bone development"/>
    <property type="evidence" value="ECO:0000315"/>
    <property type="project" value="MGI"/>
</dbReference>
<dbReference type="GO" id="GO:0060435">
    <property type="term" value="P:bronchiole development"/>
    <property type="evidence" value="ECO:0000314"/>
    <property type="project" value="MGI"/>
</dbReference>
<dbReference type="GO" id="GO:0033627">
    <property type="term" value="P:cell adhesion mediated by integrin"/>
    <property type="evidence" value="ECO:0000314"/>
    <property type="project" value="CAFA"/>
</dbReference>
<dbReference type="GO" id="GO:0000902">
    <property type="term" value="P:cell morphogenesis"/>
    <property type="evidence" value="ECO:0000315"/>
    <property type="project" value="MGI"/>
</dbReference>
<dbReference type="GO" id="GO:0007160">
    <property type="term" value="P:cell-matrix adhesion"/>
    <property type="evidence" value="ECO:0000315"/>
    <property type="project" value="MGI"/>
</dbReference>
<dbReference type="GO" id="GO:0071479">
    <property type="term" value="P:cellular response to ionizing radiation"/>
    <property type="evidence" value="ECO:0000314"/>
    <property type="project" value="MGI"/>
</dbReference>
<dbReference type="GO" id="GO:0070166">
    <property type="term" value="P:enamel mineralization"/>
    <property type="evidence" value="ECO:0000315"/>
    <property type="project" value="MGI"/>
</dbReference>
<dbReference type="GO" id="GO:0010467">
    <property type="term" value="P:gene expression"/>
    <property type="evidence" value="ECO:0000315"/>
    <property type="project" value="MGI"/>
</dbReference>
<dbReference type="GO" id="GO:0060022">
    <property type="term" value="P:hard palate development"/>
    <property type="evidence" value="ECO:0000316"/>
    <property type="project" value="MGI"/>
</dbReference>
<dbReference type="GO" id="GO:0006955">
    <property type="term" value="P:immune response"/>
    <property type="evidence" value="ECO:0000316"/>
    <property type="project" value="MGI"/>
</dbReference>
<dbReference type="GO" id="GO:0006954">
    <property type="term" value="P:inflammatory response"/>
    <property type="evidence" value="ECO:0000315"/>
    <property type="project" value="MGI"/>
</dbReference>
<dbReference type="GO" id="GO:0007229">
    <property type="term" value="P:integrin-mediated signaling pathway"/>
    <property type="evidence" value="ECO:0007669"/>
    <property type="project" value="UniProtKB-KW"/>
</dbReference>
<dbReference type="GO" id="GO:0061520">
    <property type="term" value="P:Langerhans cell differentiation"/>
    <property type="evidence" value="ECO:0000316"/>
    <property type="project" value="MGI"/>
</dbReference>
<dbReference type="GO" id="GO:0048286">
    <property type="term" value="P:lung alveolus development"/>
    <property type="evidence" value="ECO:0000314"/>
    <property type="project" value="MGI"/>
</dbReference>
<dbReference type="GO" id="GO:0055091">
    <property type="term" value="P:phospholipid homeostasis"/>
    <property type="evidence" value="ECO:0000315"/>
    <property type="project" value="MGI"/>
</dbReference>
<dbReference type="GO" id="GO:0009615">
    <property type="term" value="P:response to virus"/>
    <property type="evidence" value="ECO:0000316"/>
    <property type="project" value="MGI"/>
</dbReference>
<dbReference type="GO" id="GO:0009611">
    <property type="term" value="P:response to wounding"/>
    <property type="evidence" value="ECO:0000314"/>
    <property type="project" value="MGI"/>
</dbReference>
<dbReference type="GO" id="GO:0043588">
    <property type="term" value="P:skin development"/>
    <property type="evidence" value="ECO:0000315"/>
    <property type="project" value="MGI"/>
</dbReference>
<dbReference type="GO" id="GO:0043129">
    <property type="term" value="P:surfactant homeostasis"/>
    <property type="evidence" value="ECO:0000315"/>
    <property type="project" value="MGI"/>
</dbReference>
<dbReference type="GO" id="GO:0071604">
    <property type="term" value="P:transforming growth factor beta production"/>
    <property type="evidence" value="ECO:0000314"/>
    <property type="project" value="CAFA"/>
</dbReference>
<dbReference type="GO" id="GO:0007179">
    <property type="term" value="P:transforming growth factor beta receptor signaling pathway"/>
    <property type="evidence" value="ECO:0000315"/>
    <property type="project" value="MGI"/>
</dbReference>
<dbReference type="GO" id="GO:0042060">
    <property type="term" value="P:wound healing"/>
    <property type="evidence" value="ECO:0000315"/>
    <property type="project" value="MGI"/>
</dbReference>
<dbReference type="CDD" id="cd00054">
    <property type="entry name" value="EGF_CA"/>
    <property type="match status" value="1"/>
</dbReference>
<dbReference type="FunFam" id="1.20.5.100:FF:000004">
    <property type="entry name" value="Integrin beta"/>
    <property type="match status" value="1"/>
</dbReference>
<dbReference type="FunFam" id="2.10.25.10:FF:000043">
    <property type="entry name" value="Integrin beta"/>
    <property type="match status" value="1"/>
</dbReference>
<dbReference type="FunFam" id="2.10.25.10:FF:000075">
    <property type="entry name" value="Integrin beta"/>
    <property type="match status" value="1"/>
</dbReference>
<dbReference type="FunFam" id="2.10.25.10:FF:000328">
    <property type="entry name" value="Integrin beta"/>
    <property type="match status" value="1"/>
</dbReference>
<dbReference type="FunFam" id="2.60.40.1510:FF:000021">
    <property type="entry name" value="Integrin beta"/>
    <property type="match status" value="1"/>
</dbReference>
<dbReference type="FunFam" id="3.30.1680.10:FF:000002">
    <property type="entry name" value="Integrin beta"/>
    <property type="match status" value="1"/>
</dbReference>
<dbReference type="FunFam" id="3.40.50.410:FF:000002">
    <property type="entry name" value="Integrin beta"/>
    <property type="match status" value="1"/>
</dbReference>
<dbReference type="FunFam" id="4.10.1240.30:FF:000004">
    <property type="entry name" value="Integrin beta"/>
    <property type="match status" value="1"/>
</dbReference>
<dbReference type="Gene3D" id="4.10.1240.30">
    <property type="match status" value="1"/>
</dbReference>
<dbReference type="Gene3D" id="1.20.5.100">
    <property type="entry name" value="Cytochrome c1, transmembrane anchor, C-terminal"/>
    <property type="match status" value="1"/>
</dbReference>
<dbReference type="Gene3D" id="2.10.25.10">
    <property type="entry name" value="Laminin"/>
    <property type="match status" value="4"/>
</dbReference>
<dbReference type="Gene3D" id="3.30.1680.10">
    <property type="entry name" value="ligand-binding face of the semaphorins, domain 2"/>
    <property type="match status" value="1"/>
</dbReference>
<dbReference type="Gene3D" id="2.60.40.1510">
    <property type="entry name" value="ntegrin, alpha v. Chain A, domain 3"/>
    <property type="match status" value="1"/>
</dbReference>
<dbReference type="Gene3D" id="3.40.50.410">
    <property type="entry name" value="von Willebrand factor, type A domain"/>
    <property type="match status" value="1"/>
</dbReference>
<dbReference type="InterPro" id="IPR013111">
    <property type="entry name" value="EGF_extracell"/>
</dbReference>
<dbReference type="InterPro" id="IPR040622">
    <property type="entry name" value="I-EGF_1"/>
</dbReference>
<dbReference type="InterPro" id="IPR033760">
    <property type="entry name" value="Integrin_beta_N"/>
</dbReference>
<dbReference type="InterPro" id="IPR015812">
    <property type="entry name" value="Integrin_bsu"/>
</dbReference>
<dbReference type="InterPro" id="IPR014836">
    <property type="entry name" value="Integrin_bsu_cyt_dom"/>
</dbReference>
<dbReference type="InterPro" id="IPR012896">
    <property type="entry name" value="Integrin_bsu_tail"/>
</dbReference>
<dbReference type="InterPro" id="IPR036349">
    <property type="entry name" value="Integrin_bsu_tail_dom_sf"/>
</dbReference>
<dbReference type="InterPro" id="IPR002369">
    <property type="entry name" value="Integrin_bsu_VWA"/>
</dbReference>
<dbReference type="InterPro" id="IPR032695">
    <property type="entry name" value="Integrin_dom_sf"/>
</dbReference>
<dbReference type="InterPro" id="IPR016201">
    <property type="entry name" value="PSI"/>
</dbReference>
<dbReference type="InterPro" id="IPR036465">
    <property type="entry name" value="vWFA_dom_sf"/>
</dbReference>
<dbReference type="PANTHER" id="PTHR10082">
    <property type="entry name" value="INTEGRIN BETA SUBUNIT"/>
    <property type="match status" value="1"/>
</dbReference>
<dbReference type="PANTHER" id="PTHR10082:SF11">
    <property type="entry name" value="INTEGRIN BETA-6"/>
    <property type="match status" value="1"/>
</dbReference>
<dbReference type="Pfam" id="PF07974">
    <property type="entry name" value="EGF_2"/>
    <property type="match status" value="1"/>
</dbReference>
<dbReference type="Pfam" id="PF23105">
    <property type="entry name" value="EGF_integrin"/>
    <property type="match status" value="1"/>
</dbReference>
<dbReference type="Pfam" id="PF18372">
    <property type="entry name" value="I-EGF_1"/>
    <property type="match status" value="1"/>
</dbReference>
<dbReference type="Pfam" id="PF08725">
    <property type="entry name" value="Integrin_b_cyt"/>
    <property type="match status" value="1"/>
</dbReference>
<dbReference type="Pfam" id="PF07965">
    <property type="entry name" value="Integrin_B_tail"/>
    <property type="match status" value="1"/>
</dbReference>
<dbReference type="Pfam" id="PF00362">
    <property type="entry name" value="Integrin_beta"/>
    <property type="match status" value="1"/>
</dbReference>
<dbReference type="Pfam" id="PF17205">
    <property type="entry name" value="PSI_integrin"/>
    <property type="match status" value="1"/>
</dbReference>
<dbReference type="PIRSF" id="PIRSF002512">
    <property type="entry name" value="Integrin_B"/>
    <property type="match status" value="1"/>
</dbReference>
<dbReference type="PRINTS" id="PR01186">
    <property type="entry name" value="INTEGRINB"/>
</dbReference>
<dbReference type="SMART" id="SM00187">
    <property type="entry name" value="INB"/>
    <property type="match status" value="1"/>
</dbReference>
<dbReference type="SMART" id="SM01241">
    <property type="entry name" value="Integrin_b_cyt"/>
    <property type="match status" value="1"/>
</dbReference>
<dbReference type="SMART" id="SM01242">
    <property type="entry name" value="Integrin_B_tail"/>
    <property type="match status" value="1"/>
</dbReference>
<dbReference type="SMART" id="SM00423">
    <property type="entry name" value="PSI"/>
    <property type="match status" value="1"/>
</dbReference>
<dbReference type="SUPFAM" id="SSF57196">
    <property type="entry name" value="EGF/Laminin"/>
    <property type="match status" value="2"/>
</dbReference>
<dbReference type="SUPFAM" id="SSF69687">
    <property type="entry name" value="Integrin beta tail domain"/>
    <property type="match status" value="1"/>
</dbReference>
<dbReference type="SUPFAM" id="SSF69179">
    <property type="entry name" value="Integrin domains"/>
    <property type="match status" value="2"/>
</dbReference>
<dbReference type="SUPFAM" id="SSF103575">
    <property type="entry name" value="Plexin repeat"/>
    <property type="match status" value="1"/>
</dbReference>
<dbReference type="SUPFAM" id="SSF53300">
    <property type="entry name" value="vWA-like"/>
    <property type="match status" value="1"/>
</dbReference>
<dbReference type="PROSITE" id="PS00022">
    <property type="entry name" value="EGF_1"/>
    <property type="match status" value="2"/>
</dbReference>
<dbReference type="PROSITE" id="PS01186">
    <property type="entry name" value="EGF_2"/>
    <property type="match status" value="1"/>
</dbReference>
<dbReference type="PROSITE" id="PS00243">
    <property type="entry name" value="I_EGF_1"/>
    <property type="match status" value="2"/>
</dbReference>
<dbReference type="PROSITE" id="PS52047">
    <property type="entry name" value="I_EGF_2"/>
    <property type="match status" value="4"/>
</dbReference>
<evidence type="ECO:0000250" key="1">
    <source>
        <dbReference type="UniProtKB" id="P05106"/>
    </source>
</evidence>
<evidence type="ECO:0000250" key="2">
    <source>
        <dbReference type="UniProtKB" id="P18564"/>
    </source>
</evidence>
<evidence type="ECO:0000255" key="3"/>
<evidence type="ECO:0000255" key="4">
    <source>
        <dbReference type="PROSITE-ProRule" id="PRU01392"/>
    </source>
</evidence>
<evidence type="ECO:0000269" key="5">
    <source>
    </source>
</evidence>
<evidence type="ECO:0000305" key="6"/>
<proteinExistence type="evidence at protein level"/>
<gene>
    <name type="primary">Itgb6</name>
</gene>
<feature type="signal peptide" evidence="3">
    <location>
        <begin position="1"/>
        <end position="21"/>
    </location>
</feature>
<feature type="chain" id="PRO_0000016351" description="Integrin beta-6">
    <location>
        <begin position="22"/>
        <end position="787"/>
    </location>
</feature>
<feature type="topological domain" description="Extracellular" evidence="3">
    <location>
        <begin position="22"/>
        <end position="708"/>
    </location>
</feature>
<feature type="transmembrane region" description="Helical" evidence="3">
    <location>
        <begin position="709"/>
        <end position="729"/>
    </location>
</feature>
<feature type="topological domain" description="Cytoplasmic" evidence="3">
    <location>
        <begin position="730"/>
        <end position="787"/>
    </location>
</feature>
<feature type="domain" description="PSI" evidence="3">
    <location>
        <begin position="22"/>
        <end position="71"/>
    </location>
</feature>
<feature type="domain" description="VWFA" evidence="1">
    <location>
        <begin position="131"/>
        <end position="371"/>
    </location>
</feature>
<feature type="domain" description="I-EGF 1" evidence="4">
    <location>
        <begin position="456"/>
        <end position="491"/>
    </location>
</feature>
<feature type="domain" description="I-EGF 2" evidence="4">
    <location>
        <begin position="492"/>
        <end position="538"/>
    </location>
</feature>
<feature type="domain" description="I-EGF 3" evidence="4">
    <location>
        <begin position="539"/>
        <end position="575"/>
    </location>
</feature>
<feature type="domain" description="I-EGF 4" evidence="4">
    <location>
        <begin position="576"/>
        <end position="615"/>
    </location>
</feature>
<feature type="region of interest" description="Interaction with HAX1" evidence="2">
    <location>
        <begin position="730"/>
        <end position="757"/>
    </location>
</feature>
<feature type="binding site" description="in MIDAS binding site" evidence="2">
    <location>
        <position position="140"/>
    </location>
    <ligand>
        <name>Mg(2+)</name>
        <dbReference type="ChEBI" id="CHEBI:18420"/>
    </ligand>
</feature>
<feature type="binding site" description="in MIDAS binding site" evidence="2">
    <location>
        <position position="142"/>
    </location>
    <ligand>
        <name>Mg(2+)</name>
        <dbReference type="ChEBI" id="CHEBI:18420"/>
    </ligand>
</feature>
<feature type="binding site" description="in ADMIDAS binding site" evidence="2">
    <location>
        <position position="144"/>
    </location>
    <ligand>
        <name>Ca(2+)</name>
        <dbReference type="ChEBI" id="CHEBI:29108"/>
        <label>1</label>
    </ligand>
</feature>
<feature type="binding site" description="in MIDAS binding site" evidence="1">
    <location>
        <position position="144"/>
    </location>
    <ligand>
        <name>Mg(2+)</name>
        <dbReference type="ChEBI" id="CHEBI:18420"/>
    </ligand>
</feature>
<feature type="binding site" description="in ADMIDAS binding site" evidence="2">
    <location>
        <position position="147"/>
    </location>
    <ligand>
        <name>Ca(2+)</name>
        <dbReference type="ChEBI" id="CHEBI:29108"/>
        <label>1</label>
    </ligand>
</feature>
<feature type="binding site" description="in ADMIDAS binding site" evidence="2">
    <location>
        <position position="148"/>
    </location>
    <ligand>
        <name>Ca(2+)</name>
        <dbReference type="ChEBI" id="CHEBI:29108"/>
        <label>1</label>
    </ligand>
</feature>
<feature type="binding site" description="in LIMBS binding site" evidence="2">
    <location>
        <position position="179"/>
    </location>
    <ligand>
        <name>Ca(2+)</name>
        <dbReference type="ChEBI" id="CHEBI:29108"/>
        <label>2</label>
    </ligand>
</feature>
<feature type="binding site" description="in LIMBS binding site" evidence="2">
    <location>
        <position position="235"/>
    </location>
    <ligand>
        <name>Ca(2+)</name>
        <dbReference type="ChEBI" id="CHEBI:29108"/>
        <label>2</label>
    </ligand>
</feature>
<feature type="binding site" description="in LIMBS binding site" evidence="2">
    <location>
        <position position="237"/>
    </location>
    <ligand>
        <name>Ca(2+)</name>
        <dbReference type="ChEBI" id="CHEBI:29108"/>
        <label>2</label>
    </ligand>
</feature>
<feature type="binding site" description="in LIMBS binding site" evidence="2">
    <location>
        <position position="239"/>
    </location>
    <ligand>
        <name>Ca(2+)</name>
        <dbReference type="ChEBI" id="CHEBI:29108"/>
        <label>2</label>
    </ligand>
</feature>
<feature type="binding site" description="in LIMBS binding site" evidence="2">
    <location>
        <position position="240"/>
    </location>
    <ligand>
        <name>Ca(2+)</name>
        <dbReference type="ChEBI" id="CHEBI:29108"/>
        <label>2</label>
    </ligand>
</feature>
<feature type="binding site" description="in MIDAS binding site" evidence="2">
    <location>
        <position position="240"/>
    </location>
    <ligand>
        <name>Mg(2+)</name>
        <dbReference type="ChEBI" id="CHEBI:18420"/>
    </ligand>
</feature>
<feature type="binding site" description="in ADMIDAS binding site and liganded-open conformation" evidence="1">
    <location>
        <position position="271"/>
    </location>
    <ligand>
        <name>Ca(2+)</name>
        <dbReference type="ChEBI" id="CHEBI:29108"/>
        <label>1</label>
    </ligand>
</feature>
<feature type="binding site" description="in ADMIDAS binding site and unliganded-closed conformation" evidence="2">
    <location>
        <position position="355"/>
    </location>
    <ligand>
        <name>Ca(2+)</name>
        <dbReference type="ChEBI" id="CHEBI:29108"/>
        <label>1</label>
    </ligand>
</feature>
<feature type="glycosylation site" description="N-linked (GlcNAc...) asparagine" evidence="3">
    <location>
        <position position="48"/>
    </location>
</feature>
<feature type="glycosylation site" description="N-linked (GlcNAc...) asparagine" evidence="3">
    <location>
        <position position="97"/>
    </location>
</feature>
<feature type="glycosylation site" description="N-linked (GlcNAc...) asparagine" evidence="3">
    <location>
        <position position="260"/>
    </location>
</feature>
<feature type="glycosylation site" description="N-linked (GlcNAc...) asparagine" evidence="3">
    <location>
        <position position="387"/>
    </location>
</feature>
<feature type="glycosylation site" description="N-linked (GlcNAc...) asparagine" evidence="3">
    <location>
        <position position="418"/>
    </location>
</feature>
<feature type="glycosylation site" description="N-linked (GlcNAc...) asparagine" evidence="3">
    <location>
        <position position="463"/>
    </location>
</feature>
<feature type="glycosylation site" description="N-linked (GlcNAc...) asparagine" evidence="3">
    <location>
        <position position="471"/>
    </location>
</feature>
<feature type="glycosylation site" description="N-linked (GlcNAc...) asparagine" evidence="3">
    <location>
        <position position="541"/>
    </location>
</feature>
<feature type="glycosylation site" description="N-linked (GlcNAc...) asparagine" evidence="3">
    <location>
        <position position="575"/>
    </location>
</feature>
<feature type="disulfide bond" evidence="2">
    <location>
        <begin position="23"/>
        <end position="41"/>
    </location>
</feature>
<feature type="disulfide bond" evidence="2">
    <location>
        <begin position="31"/>
        <end position="454"/>
    </location>
</feature>
<feature type="disulfide bond" evidence="2">
    <location>
        <begin position="34"/>
        <end position="59"/>
    </location>
</feature>
<feature type="disulfide bond" evidence="2">
    <location>
        <begin position="44"/>
        <end position="70"/>
    </location>
</feature>
<feature type="disulfide bond" evidence="2">
    <location>
        <begin position="197"/>
        <end position="204"/>
    </location>
</feature>
<feature type="disulfide bond" evidence="2">
    <location>
        <begin position="252"/>
        <end position="293"/>
    </location>
</feature>
<feature type="disulfide bond" evidence="2">
    <location>
        <begin position="394"/>
        <end position="406"/>
    </location>
</feature>
<feature type="disulfide bond" evidence="2">
    <location>
        <begin position="426"/>
        <end position="452"/>
    </location>
</feature>
<feature type="disulfide bond" evidence="4">
    <location>
        <begin position="456"/>
        <end position="476"/>
    </location>
</feature>
<feature type="disulfide bond" evidence="4">
    <location>
        <begin position="467"/>
        <end position="479"/>
    </location>
</feature>
<feature type="disulfide bond" evidence="4">
    <location>
        <begin position="481"/>
        <end position="490"/>
    </location>
</feature>
<feature type="disulfide bond" evidence="4">
    <location>
        <begin position="492"/>
        <end position="519"/>
    </location>
</feature>
<feature type="disulfide bond" evidence="4">
    <location>
        <begin position="502"/>
        <end position="517"/>
    </location>
</feature>
<feature type="disulfide bond" evidence="4">
    <location>
        <begin position="511"/>
        <end position="522"/>
    </location>
</feature>
<feature type="disulfide bond" evidence="4">
    <location>
        <begin position="524"/>
        <end position="537"/>
    </location>
</feature>
<feature type="disulfide bond" evidence="4">
    <location>
        <begin position="539"/>
        <end position="560"/>
    </location>
</feature>
<feature type="disulfide bond" evidence="4">
    <location>
        <begin position="544"/>
        <end position="558"/>
    </location>
</feature>
<feature type="disulfide bond" evidence="4">
    <location>
        <begin position="552"/>
        <end position="563"/>
    </location>
</feature>
<feature type="disulfide bond" evidence="4">
    <location>
        <begin position="565"/>
        <end position="574"/>
    </location>
</feature>
<feature type="disulfide bond" evidence="4">
    <location>
        <begin position="576"/>
        <end position="599"/>
    </location>
</feature>
<feature type="disulfide bond" evidence="4">
    <location>
        <begin position="583"/>
        <end position="597"/>
    </location>
</feature>
<feature type="disulfide bond" evidence="4">
    <location>
        <begin position="591"/>
        <end position="602"/>
    </location>
</feature>
<feature type="disulfide bond" evidence="4">
    <location>
        <begin position="604"/>
        <end position="614"/>
    </location>
</feature>
<feature type="disulfide bond" evidence="1">
    <location>
        <begin position="617"/>
        <end position="620"/>
    </location>
</feature>
<feature type="disulfide bond" evidence="1">
    <location>
        <begin position="624"/>
        <end position="669"/>
    </location>
</feature>
<feature type="disulfide bond" evidence="1">
    <location>
        <begin position="630"/>
        <end position="649"/>
    </location>
</feature>
<feature type="disulfide bond" evidence="1">
    <location>
        <begin position="633"/>
        <end position="645"/>
    </location>
</feature>
<feature type="disulfide bond" evidence="1">
    <location>
        <begin position="677"/>
        <end position="701"/>
    </location>
</feature>
<organism>
    <name type="scientific">Mus musculus</name>
    <name type="common">Mouse</name>
    <dbReference type="NCBI Taxonomy" id="10090"/>
    <lineage>
        <taxon>Eukaryota</taxon>
        <taxon>Metazoa</taxon>
        <taxon>Chordata</taxon>
        <taxon>Craniata</taxon>
        <taxon>Vertebrata</taxon>
        <taxon>Euteleostomi</taxon>
        <taxon>Mammalia</taxon>
        <taxon>Eutheria</taxon>
        <taxon>Euarchontoglires</taxon>
        <taxon>Glires</taxon>
        <taxon>Rodentia</taxon>
        <taxon>Myomorpha</taxon>
        <taxon>Muroidea</taxon>
        <taxon>Muridae</taxon>
        <taxon>Murinae</taxon>
        <taxon>Mus</taxon>
        <taxon>Mus</taxon>
    </lineage>
</organism>
<name>ITB6_MOUSE</name>
<accession>Q9Z0T9</accession>
<accession>Q544J9</accession>
<sequence>MGIELVCLFLLLLGRNDHVQGGCAWGGAESCSDCLLTGPHCAWCSQENFTHLSGAGERCDTPANLLAKGCQLPFIENPVSRIEVLQNKPLSVGRQKNSSDIVQIAPQSLVLKLRPGREQTLQVQVRQTEDYPVDLYYLMDLSASMDDDLNTIKELGSRLAKEMSKLTSNFRLGFGSFVEKPVSPFMKTTPEEITNPCSSIPYFCLPTFGFKHILPLTDDAERFNEIVRKQKISANIDTPEGGFDAIMQAAVCKEKIGWRNDSLHLLVFVSDADSHFGMDSKLAGIVIPNDGLCHLDHRNEYSMSTVLEYPTIGQLIDKLVQNNVLLIFAVTQEQVHLYENYAKLIPGATVGLLQKDSGNILQLIISAYEELRSEVELEVLGDTEGLNLSFTALCNNGVLFPHQKKCSHMKVGDTASFNVTVSVSNCEKRSRNLIIKPVGLGDTLEILVSAECDCDCQREIETNSSKCHNGNGSFQCGVCTCNPGHMGPHCECGEDMVSTDSCKESPGHPSCSGRGDCYCGQCICHLSPYGSIYGPYCQCDNFSCLRHKGLLCGDNGDCDCGECVCRDGWTGEYCNCTTNRDSCTSEDGVLCSGRGDCVCGKCVCRNPGASGPTCERCPTCGDPCNSKRSCIECYLSADGQAQEECADKCKAIGATISEEDFSKDTSVSCSLQGENECLITFLITTDNEGKTIIHNINEKDCPKPPNIPMIMLGVSLAILLIGVVLLCIWKLLVSFHDRKEVAKFEAERSKAKWQTGTNPLYRGSTSTFKNVTYKHREKHKAGLSSDG</sequence>
<reference key="1">
    <citation type="journal article" date="2000" name="J. Am. Soc. Nephrol.">
        <title>Mouse beta(6) integrin sequence, pattern of expression, and role in kidney development.</title>
        <authorList>
            <person name="Arend L.J."/>
            <person name="Smart A.M."/>
            <person name="Briggs J.P."/>
        </authorList>
    </citation>
    <scope>NUCLEOTIDE SEQUENCE [MRNA]</scope>
    <source>
        <tissue>Kidney</tissue>
    </source>
</reference>
<reference key="2">
    <citation type="journal article" date="2005" name="Science">
        <title>The transcriptional landscape of the mammalian genome.</title>
        <authorList>
            <person name="Carninci P."/>
            <person name="Kasukawa T."/>
            <person name="Katayama S."/>
            <person name="Gough J."/>
            <person name="Frith M.C."/>
            <person name="Maeda N."/>
            <person name="Oyama R."/>
            <person name="Ravasi T."/>
            <person name="Lenhard B."/>
            <person name="Wells C."/>
            <person name="Kodzius R."/>
            <person name="Shimokawa K."/>
            <person name="Bajic V.B."/>
            <person name="Brenner S.E."/>
            <person name="Batalov S."/>
            <person name="Forrest A.R."/>
            <person name="Zavolan M."/>
            <person name="Davis M.J."/>
            <person name="Wilming L.G."/>
            <person name="Aidinis V."/>
            <person name="Allen J.E."/>
            <person name="Ambesi-Impiombato A."/>
            <person name="Apweiler R."/>
            <person name="Aturaliya R.N."/>
            <person name="Bailey T.L."/>
            <person name="Bansal M."/>
            <person name="Baxter L."/>
            <person name="Beisel K.W."/>
            <person name="Bersano T."/>
            <person name="Bono H."/>
            <person name="Chalk A.M."/>
            <person name="Chiu K.P."/>
            <person name="Choudhary V."/>
            <person name="Christoffels A."/>
            <person name="Clutterbuck D.R."/>
            <person name="Crowe M.L."/>
            <person name="Dalla E."/>
            <person name="Dalrymple B.P."/>
            <person name="de Bono B."/>
            <person name="Della Gatta G."/>
            <person name="di Bernardo D."/>
            <person name="Down T."/>
            <person name="Engstrom P."/>
            <person name="Fagiolini M."/>
            <person name="Faulkner G."/>
            <person name="Fletcher C.F."/>
            <person name="Fukushima T."/>
            <person name="Furuno M."/>
            <person name="Futaki S."/>
            <person name="Gariboldi M."/>
            <person name="Georgii-Hemming P."/>
            <person name="Gingeras T.R."/>
            <person name="Gojobori T."/>
            <person name="Green R.E."/>
            <person name="Gustincich S."/>
            <person name="Harbers M."/>
            <person name="Hayashi Y."/>
            <person name="Hensch T.K."/>
            <person name="Hirokawa N."/>
            <person name="Hill D."/>
            <person name="Huminiecki L."/>
            <person name="Iacono M."/>
            <person name="Ikeo K."/>
            <person name="Iwama A."/>
            <person name="Ishikawa T."/>
            <person name="Jakt M."/>
            <person name="Kanapin A."/>
            <person name="Katoh M."/>
            <person name="Kawasawa Y."/>
            <person name="Kelso J."/>
            <person name="Kitamura H."/>
            <person name="Kitano H."/>
            <person name="Kollias G."/>
            <person name="Krishnan S.P."/>
            <person name="Kruger A."/>
            <person name="Kummerfeld S.K."/>
            <person name="Kurochkin I.V."/>
            <person name="Lareau L.F."/>
            <person name="Lazarevic D."/>
            <person name="Lipovich L."/>
            <person name="Liu J."/>
            <person name="Liuni S."/>
            <person name="McWilliam S."/>
            <person name="Madan Babu M."/>
            <person name="Madera M."/>
            <person name="Marchionni L."/>
            <person name="Matsuda H."/>
            <person name="Matsuzawa S."/>
            <person name="Miki H."/>
            <person name="Mignone F."/>
            <person name="Miyake S."/>
            <person name="Morris K."/>
            <person name="Mottagui-Tabar S."/>
            <person name="Mulder N."/>
            <person name="Nakano N."/>
            <person name="Nakauchi H."/>
            <person name="Ng P."/>
            <person name="Nilsson R."/>
            <person name="Nishiguchi S."/>
            <person name="Nishikawa S."/>
            <person name="Nori F."/>
            <person name="Ohara O."/>
            <person name="Okazaki Y."/>
            <person name="Orlando V."/>
            <person name="Pang K.C."/>
            <person name="Pavan W.J."/>
            <person name="Pavesi G."/>
            <person name="Pesole G."/>
            <person name="Petrovsky N."/>
            <person name="Piazza S."/>
            <person name="Reed J."/>
            <person name="Reid J.F."/>
            <person name="Ring B.Z."/>
            <person name="Ringwald M."/>
            <person name="Rost B."/>
            <person name="Ruan Y."/>
            <person name="Salzberg S.L."/>
            <person name="Sandelin A."/>
            <person name="Schneider C."/>
            <person name="Schoenbach C."/>
            <person name="Sekiguchi K."/>
            <person name="Semple C.A."/>
            <person name="Seno S."/>
            <person name="Sessa L."/>
            <person name="Sheng Y."/>
            <person name="Shibata Y."/>
            <person name="Shimada H."/>
            <person name="Shimada K."/>
            <person name="Silva D."/>
            <person name="Sinclair B."/>
            <person name="Sperling S."/>
            <person name="Stupka E."/>
            <person name="Sugiura K."/>
            <person name="Sultana R."/>
            <person name="Takenaka Y."/>
            <person name="Taki K."/>
            <person name="Tammoja K."/>
            <person name="Tan S.L."/>
            <person name="Tang S."/>
            <person name="Taylor M.S."/>
            <person name="Tegner J."/>
            <person name="Teichmann S.A."/>
            <person name="Ueda H.R."/>
            <person name="van Nimwegen E."/>
            <person name="Verardo R."/>
            <person name="Wei C.L."/>
            <person name="Yagi K."/>
            <person name="Yamanishi H."/>
            <person name="Zabarovsky E."/>
            <person name="Zhu S."/>
            <person name="Zimmer A."/>
            <person name="Hide W."/>
            <person name="Bult C."/>
            <person name="Grimmond S.M."/>
            <person name="Teasdale R.D."/>
            <person name="Liu E.T."/>
            <person name="Brusic V."/>
            <person name="Quackenbush J."/>
            <person name="Wahlestedt C."/>
            <person name="Mattick J.S."/>
            <person name="Hume D.A."/>
            <person name="Kai C."/>
            <person name="Sasaki D."/>
            <person name="Tomaru Y."/>
            <person name="Fukuda S."/>
            <person name="Kanamori-Katayama M."/>
            <person name="Suzuki M."/>
            <person name="Aoki J."/>
            <person name="Arakawa T."/>
            <person name="Iida J."/>
            <person name="Imamura K."/>
            <person name="Itoh M."/>
            <person name="Kato T."/>
            <person name="Kawaji H."/>
            <person name="Kawagashira N."/>
            <person name="Kawashima T."/>
            <person name="Kojima M."/>
            <person name="Kondo S."/>
            <person name="Konno H."/>
            <person name="Nakano K."/>
            <person name="Ninomiya N."/>
            <person name="Nishio T."/>
            <person name="Okada M."/>
            <person name="Plessy C."/>
            <person name="Shibata K."/>
            <person name="Shiraki T."/>
            <person name="Suzuki S."/>
            <person name="Tagami M."/>
            <person name="Waki K."/>
            <person name="Watahiki A."/>
            <person name="Okamura-Oho Y."/>
            <person name="Suzuki H."/>
            <person name="Kawai J."/>
            <person name="Hayashizaki Y."/>
        </authorList>
    </citation>
    <scope>NUCLEOTIDE SEQUENCE [LARGE SCALE MRNA]</scope>
    <source>
        <strain>C57BL/6J</strain>
        <tissue>Bone</tissue>
    </source>
</reference>
<reference key="3">
    <citation type="journal article" date="2004" name="Genome Res.">
        <title>The status, quality, and expansion of the NIH full-length cDNA project: the Mammalian Gene Collection (MGC).</title>
        <authorList>
            <consortium name="The MGC Project Team"/>
        </authorList>
    </citation>
    <scope>NUCLEOTIDE SEQUENCE [LARGE SCALE MRNA]</scope>
    <source>
        <strain>FVB/N</strain>
        <tissue>Colon</tissue>
    </source>
</reference>
<reference key="4">
    <citation type="journal article" date="2010" name="Cell">
        <title>A tissue-specific atlas of mouse protein phosphorylation and expression.</title>
        <authorList>
            <person name="Huttlin E.L."/>
            <person name="Jedrychowski M.P."/>
            <person name="Elias J.E."/>
            <person name="Goswami T."/>
            <person name="Rad R."/>
            <person name="Beausoleil S.A."/>
            <person name="Villen J."/>
            <person name="Haas W."/>
            <person name="Sowa M.E."/>
            <person name="Gygi S.P."/>
        </authorList>
    </citation>
    <scope>IDENTIFICATION BY MASS SPECTROMETRY [LARGE SCALE ANALYSIS]</scope>
    <source>
        <tissue>Kidney</tissue>
        <tissue>Lung</tissue>
    </source>
</reference>
<reference key="5">
    <citation type="journal article" date="1999" name="Cell">
        <title>The integrin alpha v beta 6 binds and activates latent TGF beta 1: a mechanism for regulating pulmonary inflammation and fibrosis.</title>
        <authorList>
            <person name="Munger J.S."/>
            <person name="Huang X."/>
            <person name="Kawakatsu H."/>
            <person name="Griffiths M.J."/>
            <person name="Dalton S.L."/>
            <person name="Wu J."/>
            <person name="Pittet J.F."/>
            <person name="Kaminski N."/>
            <person name="Garat C."/>
            <person name="Matthay M.A."/>
            <person name="Rifkin D.B."/>
            <person name="Sheppard D."/>
        </authorList>
    </citation>
    <scope>FUNCTION</scope>
</reference>